<protein>
    <recommendedName>
        <fullName evidence="1">Segregation and condensation protein A</fullName>
    </recommendedName>
</protein>
<organism>
    <name type="scientific">Lactobacillus johnsonii (strain CNCM I-12250 / La1 / NCC 533)</name>
    <dbReference type="NCBI Taxonomy" id="257314"/>
    <lineage>
        <taxon>Bacteria</taxon>
        <taxon>Bacillati</taxon>
        <taxon>Bacillota</taxon>
        <taxon>Bacilli</taxon>
        <taxon>Lactobacillales</taxon>
        <taxon>Lactobacillaceae</taxon>
        <taxon>Lactobacillus</taxon>
    </lineage>
</organism>
<gene>
    <name evidence="1" type="primary">scpA</name>
    <name type="ordered locus">LJ_1084</name>
</gene>
<comment type="function">
    <text evidence="1">Participates in chromosomal partition during cell division. May act via the formation of a condensin-like complex containing Smc and ScpB that pull DNA away from mid-cell into both cell halves.</text>
</comment>
<comment type="subunit">
    <text evidence="1">Component of a cohesin-like complex composed of ScpA, ScpB and the Smc homodimer, in which ScpA and ScpB bind to the head domain of Smc. The presence of the three proteins is required for the association of the complex with DNA.</text>
</comment>
<comment type="subcellular location">
    <subcellularLocation>
        <location evidence="1">Cytoplasm</location>
    </subcellularLocation>
    <text evidence="1">Associated with two foci at the outer edges of the nucleoid region in young cells, and at four foci within both cell halves in older cells.</text>
</comment>
<comment type="similarity">
    <text evidence="1">Belongs to the ScpA family.</text>
</comment>
<sequence length="247" mass="28752">MNNVDELTLDLPNFTGPLDLLLHLIRSQKIDIYDIPIAKITGQYLANLARWQTLDLQIAGEYFVMASTLLRIKSQYLLPKNDFIEEDQYQEDPRTELVEQLVQYSVFQRIAEYFKKRDEEMPITVAKDPSVSPKKEIEPLPLGEITSDELANTFKVVLERFKLRKPQVGKIEVHETSIEEMTSFLKNRLQKKRSTSFFDCIKSFQDLDQVIGLFLAVLELCRDHKILVKQNRDFGDLELEKVEINGK</sequence>
<accession>Q74JM3</accession>
<dbReference type="EMBL" id="AE017198">
    <property type="protein sequence ID" value="AAS08906.1"/>
    <property type="molecule type" value="Genomic_DNA"/>
</dbReference>
<dbReference type="RefSeq" id="WP_011161930.1">
    <property type="nucleotide sequence ID" value="NC_005362.1"/>
</dbReference>
<dbReference type="SMR" id="Q74JM3"/>
<dbReference type="KEGG" id="ljo:LJ_1084"/>
<dbReference type="PATRIC" id="fig|257314.6.peg.945"/>
<dbReference type="eggNOG" id="COG1354">
    <property type="taxonomic scope" value="Bacteria"/>
</dbReference>
<dbReference type="HOGENOM" id="CLU_038686_3_1_9"/>
<dbReference type="Proteomes" id="UP000000581">
    <property type="component" value="Chromosome"/>
</dbReference>
<dbReference type="GO" id="GO:0005737">
    <property type="term" value="C:cytoplasm"/>
    <property type="evidence" value="ECO:0007669"/>
    <property type="project" value="UniProtKB-SubCell"/>
</dbReference>
<dbReference type="GO" id="GO:0051301">
    <property type="term" value="P:cell division"/>
    <property type="evidence" value="ECO:0007669"/>
    <property type="project" value="UniProtKB-KW"/>
</dbReference>
<dbReference type="GO" id="GO:0007059">
    <property type="term" value="P:chromosome segregation"/>
    <property type="evidence" value="ECO:0007669"/>
    <property type="project" value="UniProtKB-UniRule"/>
</dbReference>
<dbReference type="GO" id="GO:0006260">
    <property type="term" value="P:DNA replication"/>
    <property type="evidence" value="ECO:0007669"/>
    <property type="project" value="UniProtKB-UniRule"/>
</dbReference>
<dbReference type="Gene3D" id="6.10.250.2410">
    <property type="match status" value="1"/>
</dbReference>
<dbReference type="Gene3D" id="1.10.10.580">
    <property type="entry name" value="Structural maintenance of chromosome 1. Chain E"/>
    <property type="match status" value="1"/>
</dbReference>
<dbReference type="HAMAP" id="MF_01805">
    <property type="entry name" value="ScpA"/>
    <property type="match status" value="1"/>
</dbReference>
<dbReference type="InterPro" id="IPR003768">
    <property type="entry name" value="ScpA"/>
</dbReference>
<dbReference type="InterPro" id="IPR023093">
    <property type="entry name" value="ScpA-like_C"/>
</dbReference>
<dbReference type="PANTHER" id="PTHR33969">
    <property type="entry name" value="SEGREGATION AND CONDENSATION PROTEIN A"/>
    <property type="match status" value="1"/>
</dbReference>
<dbReference type="PANTHER" id="PTHR33969:SF2">
    <property type="entry name" value="SEGREGATION AND CONDENSATION PROTEIN A"/>
    <property type="match status" value="1"/>
</dbReference>
<dbReference type="Pfam" id="PF02616">
    <property type="entry name" value="SMC_ScpA"/>
    <property type="match status" value="1"/>
</dbReference>
<evidence type="ECO:0000255" key="1">
    <source>
        <dbReference type="HAMAP-Rule" id="MF_01805"/>
    </source>
</evidence>
<proteinExistence type="inferred from homology"/>
<feature type="chain" id="PRO_0000211085" description="Segregation and condensation protein A">
    <location>
        <begin position="1"/>
        <end position="247"/>
    </location>
</feature>
<reference key="1">
    <citation type="journal article" date="2004" name="Proc. Natl. Acad. Sci. U.S.A.">
        <title>The genome sequence of the probiotic intestinal bacterium Lactobacillus johnsonii NCC 533.</title>
        <authorList>
            <person name="Pridmore R.D."/>
            <person name="Berger B."/>
            <person name="Desiere F."/>
            <person name="Vilanova D."/>
            <person name="Barretto C."/>
            <person name="Pittet A.-C."/>
            <person name="Zwahlen M.-C."/>
            <person name="Rouvet M."/>
            <person name="Altermann E."/>
            <person name="Barrangou R."/>
            <person name="Mollet B."/>
            <person name="Mercenier A."/>
            <person name="Klaenhammer T."/>
            <person name="Arigoni F."/>
            <person name="Schell M.A."/>
        </authorList>
    </citation>
    <scope>NUCLEOTIDE SEQUENCE [LARGE SCALE GENOMIC DNA]</scope>
    <source>
        <strain>CNCM I-1225 / La1 / NCC 533</strain>
    </source>
</reference>
<name>SCPA_LACJO</name>
<keyword id="KW-0131">Cell cycle</keyword>
<keyword id="KW-0132">Cell division</keyword>
<keyword id="KW-0159">Chromosome partition</keyword>
<keyword id="KW-0963">Cytoplasm</keyword>